<feature type="chain" id="PRO_0000338495" description="Nuclease SbcCD subunit D">
    <location>
        <begin position="1"/>
        <end position="376"/>
    </location>
</feature>
<keyword id="KW-0233">DNA recombination</keyword>
<keyword id="KW-0235">DNA replication</keyword>
<keyword id="KW-0255">Endonuclease</keyword>
<keyword id="KW-0269">Exonuclease</keyword>
<keyword id="KW-0378">Hydrolase</keyword>
<keyword id="KW-0540">Nuclease</keyword>
<keyword id="KW-1185">Reference proteome</keyword>
<dbReference type="EMBL" id="AP008934">
    <property type="protein sequence ID" value="BAE18557.1"/>
    <property type="molecule type" value="Genomic_DNA"/>
</dbReference>
<dbReference type="RefSeq" id="WP_011303184.1">
    <property type="nucleotide sequence ID" value="NZ_MTGA01000038.1"/>
</dbReference>
<dbReference type="SMR" id="Q49XE0"/>
<dbReference type="GeneID" id="3615351"/>
<dbReference type="KEGG" id="ssp:SSP1412"/>
<dbReference type="PATRIC" id="fig|342451.11.peg.1415"/>
<dbReference type="eggNOG" id="COG0420">
    <property type="taxonomic scope" value="Bacteria"/>
</dbReference>
<dbReference type="HOGENOM" id="CLU_038045_0_1_9"/>
<dbReference type="OrthoDB" id="9773856at2"/>
<dbReference type="Proteomes" id="UP000006371">
    <property type="component" value="Chromosome"/>
</dbReference>
<dbReference type="GO" id="GO:0008408">
    <property type="term" value="F:3'-5' exonuclease activity"/>
    <property type="evidence" value="ECO:0007669"/>
    <property type="project" value="InterPro"/>
</dbReference>
<dbReference type="GO" id="GO:0004519">
    <property type="term" value="F:endonuclease activity"/>
    <property type="evidence" value="ECO:0007669"/>
    <property type="project" value="UniProtKB-KW"/>
</dbReference>
<dbReference type="GO" id="GO:0006310">
    <property type="term" value="P:DNA recombination"/>
    <property type="evidence" value="ECO:0007669"/>
    <property type="project" value="UniProtKB-KW"/>
</dbReference>
<dbReference type="GO" id="GO:0006260">
    <property type="term" value="P:DNA replication"/>
    <property type="evidence" value="ECO:0007669"/>
    <property type="project" value="UniProtKB-KW"/>
</dbReference>
<dbReference type="CDD" id="cd00840">
    <property type="entry name" value="MPP_Mre11_N"/>
    <property type="match status" value="1"/>
</dbReference>
<dbReference type="Gene3D" id="3.60.21.10">
    <property type="match status" value="1"/>
</dbReference>
<dbReference type="InterPro" id="IPR004843">
    <property type="entry name" value="Calcineurin-like_PHP_ApaH"/>
</dbReference>
<dbReference type="InterPro" id="IPR050535">
    <property type="entry name" value="DNA_Repair-Maintenance_Comp"/>
</dbReference>
<dbReference type="InterPro" id="IPR029052">
    <property type="entry name" value="Metallo-depent_PP-like"/>
</dbReference>
<dbReference type="InterPro" id="IPR041796">
    <property type="entry name" value="Mre11_N"/>
</dbReference>
<dbReference type="InterPro" id="IPR053381">
    <property type="entry name" value="SbcCD_nuclease"/>
</dbReference>
<dbReference type="InterPro" id="IPR004593">
    <property type="entry name" value="SbcD"/>
</dbReference>
<dbReference type="InterPro" id="IPR026843">
    <property type="entry name" value="SbcD_C"/>
</dbReference>
<dbReference type="NCBIfam" id="TIGR00619">
    <property type="entry name" value="sbcd"/>
    <property type="match status" value="1"/>
</dbReference>
<dbReference type="NCBIfam" id="NF041753">
    <property type="entry name" value="sbcd_Staph"/>
    <property type="match status" value="1"/>
</dbReference>
<dbReference type="PANTHER" id="PTHR30337">
    <property type="entry name" value="COMPONENT OF ATP-DEPENDENT DSDNA EXONUCLEASE"/>
    <property type="match status" value="1"/>
</dbReference>
<dbReference type="PANTHER" id="PTHR30337:SF0">
    <property type="entry name" value="NUCLEASE SBCCD SUBUNIT D"/>
    <property type="match status" value="1"/>
</dbReference>
<dbReference type="Pfam" id="PF00149">
    <property type="entry name" value="Metallophos"/>
    <property type="match status" value="1"/>
</dbReference>
<dbReference type="Pfam" id="PF12320">
    <property type="entry name" value="SbcD_C"/>
    <property type="match status" value="1"/>
</dbReference>
<dbReference type="SUPFAM" id="SSF56300">
    <property type="entry name" value="Metallo-dependent phosphatases"/>
    <property type="match status" value="1"/>
</dbReference>
<protein>
    <recommendedName>
        <fullName>Nuclease SbcCD subunit D</fullName>
    </recommendedName>
</protein>
<organism>
    <name type="scientific">Staphylococcus saprophyticus subsp. saprophyticus (strain ATCC 15305 / DSM 20229 / NCIMB 8711 / NCTC 7292 / S-41)</name>
    <dbReference type="NCBI Taxonomy" id="342451"/>
    <lineage>
        <taxon>Bacteria</taxon>
        <taxon>Bacillati</taxon>
        <taxon>Bacillota</taxon>
        <taxon>Bacilli</taxon>
        <taxon>Bacillales</taxon>
        <taxon>Staphylococcaceae</taxon>
        <taxon>Staphylococcus</taxon>
    </lineage>
</organism>
<proteinExistence type="inferred from homology"/>
<evidence type="ECO:0000250" key="1"/>
<evidence type="ECO:0000305" key="2"/>
<accession>Q49XE0</accession>
<name>SBCD_STAS1</name>
<gene>
    <name type="primary">sbcD</name>
    <name type="ordered locus">SSP1412</name>
</gene>
<reference key="1">
    <citation type="journal article" date="2005" name="Proc. Natl. Acad. Sci. U.S.A.">
        <title>Whole genome sequence of Staphylococcus saprophyticus reveals the pathogenesis of uncomplicated urinary tract infection.</title>
        <authorList>
            <person name="Kuroda M."/>
            <person name="Yamashita A."/>
            <person name="Hirakawa H."/>
            <person name="Kumano M."/>
            <person name="Morikawa K."/>
            <person name="Higashide M."/>
            <person name="Maruyama A."/>
            <person name="Inose Y."/>
            <person name="Matoba K."/>
            <person name="Toh H."/>
            <person name="Kuhara S."/>
            <person name="Hattori M."/>
            <person name="Ohta T."/>
        </authorList>
    </citation>
    <scope>NUCLEOTIDE SEQUENCE [LARGE SCALE GENOMIC DNA]</scope>
    <source>
        <strain>ATCC 15305 / DSM 20229 / NCIMB 8711 / NCTC 7292 / S-41</strain>
    </source>
</reference>
<sequence length="376" mass="43708">MKIIHTADWHLGRILNGKSLLEDQAYILDKFIEAMKLEQPDVIVIAGDLYDTSYPNKDAIQLLEQTIDILNLEMSIPLIMINGNHDSKERLNYGSKWFEKSHMYIRTDLNDMNKPVTIGNVDFYTMPFATINEMQYFFDDKAIETHQQALNRVLAYMHEVIDENKVNIFVGHLTVQGGIRSESERPLTIGTVESVDENLFNQFDRVMLGHLHHPFSIESNFINYSGSLLQYSFSETKQPKGYKIVEIKNQKITDKFIPLKPLRQLEVIEGNYEDAIQEKLEVKHKENYLHFKLKHMSHVSDPMMHLKQIYPNTLALTNQTFDFNTSIHHENIEIQKLDDETIIDNFYNSITGEHLTTNQSKKIEKIMTALLEEGSK</sequence>
<comment type="function">
    <text evidence="1">SbcCD cleaves DNA hairpin structures. These structures can inhibit DNA replication and are intermediates in certain DNA recombination reactions. The complex acts as a 3'-&gt;5' double strand exonuclease that can open hairpins. It also has a 5' single-strand endonuclease activity (By similarity).</text>
</comment>
<comment type="subunit">
    <text evidence="1">Heterodimer of SbcC and SbcD.</text>
</comment>
<comment type="similarity">
    <text evidence="2">Belongs to the SbcD family.</text>
</comment>